<reference key="1">
    <citation type="submission" date="2006-06" db="EMBL/GenBank/DDBJ databases">
        <title>Complete sequence of Rubrobacter xylanophilus DSM 9941.</title>
        <authorList>
            <consortium name="US DOE Joint Genome Institute"/>
            <person name="Copeland A."/>
            <person name="Lucas S."/>
            <person name="Lapidus A."/>
            <person name="Barry K."/>
            <person name="Detter J.C."/>
            <person name="Glavina del Rio T."/>
            <person name="Hammon N."/>
            <person name="Israni S."/>
            <person name="Dalin E."/>
            <person name="Tice H."/>
            <person name="Pitluck S."/>
            <person name="Munk A.C."/>
            <person name="Brettin T."/>
            <person name="Bruce D."/>
            <person name="Han C."/>
            <person name="Tapia R."/>
            <person name="Gilna P."/>
            <person name="Schmutz J."/>
            <person name="Larimer F."/>
            <person name="Land M."/>
            <person name="Hauser L."/>
            <person name="Kyrpides N."/>
            <person name="Lykidis A."/>
            <person name="da Costa M.S."/>
            <person name="Rainey F.A."/>
            <person name="Empadinhas N."/>
            <person name="Jolivet E."/>
            <person name="Battista J.R."/>
            <person name="Richardson P."/>
        </authorList>
    </citation>
    <scope>NUCLEOTIDE SEQUENCE [LARGE SCALE GENOMIC DNA]</scope>
    <source>
        <strain>DSM 9941 / JCM 11954 / NBRC 16129 / PRD-1</strain>
    </source>
</reference>
<name>NUSB_RUBXD</name>
<dbReference type="EMBL" id="CP000386">
    <property type="protein sequence ID" value="ABG04419.1"/>
    <property type="molecule type" value="Genomic_DNA"/>
</dbReference>
<dbReference type="RefSeq" id="WP_011564436.1">
    <property type="nucleotide sequence ID" value="NC_008148.1"/>
</dbReference>
<dbReference type="SMR" id="Q1AW09"/>
<dbReference type="STRING" id="266117.Rxyl_1457"/>
<dbReference type="KEGG" id="rxy:Rxyl_1457"/>
<dbReference type="eggNOG" id="COG0781">
    <property type="taxonomic scope" value="Bacteria"/>
</dbReference>
<dbReference type="HOGENOM" id="CLU_087843_3_3_11"/>
<dbReference type="OrthoDB" id="3528057at2"/>
<dbReference type="PhylomeDB" id="Q1AW09"/>
<dbReference type="Proteomes" id="UP000006637">
    <property type="component" value="Chromosome"/>
</dbReference>
<dbReference type="GO" id="GO:0005829">
    <property type="term" value="C:cytosol"/>
    <property type="evidence" value="ECO:0007669"/>
    <property type="project" value="TreeGrafter"/>
</dbReference>
<dbReference type="GO" id="GO:0003723">
    <property type="term" value="F:RNA binding"/>
    <property type="evidence" value="ECO:0007669"/>
    <property type="project" value="UniProtKB-UniRule"/>
</dbReference>
<dbReference type="GO" id="GO:0006353">
    <property type="term" value="P:DNA-templated transcription termination"/>
    <property type="evidence" value="ECO:0007669"/>
    <property type="project" value="UniProtKB-UniRule"/>
</dbReference>
<dbReference type="GO" id="GO:0031564">
    <property type="term" value="P:transcription antitermination"/>
    <property type="evidence" value="ECO:0007669"/>
    <property type="project" value="UniProtKB-KW"/>
</dbReference>
<dbReference type="Gene3D" id="1.10.940.10">
    <property type="entry name" value="NusB-like"/>
    <property type="match status" value="1"/>
</dbReference>
<dbReference type="HAMAP" id="MF_00073">
    <property type="entry name" value="NusB"/>
    <property type="match status" value="1"/>
</dbReference>
<dbReference type="InterPro" id="IPR035926">
    <property type="entry name" value="NusB-like_sf"/>
</dbReference>
<dbReference type="InterPro" id="IPR011605">
    <property type="entry name" value="NusB_fam"/>
</dbReference>
<dbReference type="InterPro" id="IPR006027">
    <property type="entry name" value="NusB_RsmB_TIM44"/>
</dbReference>
<dbReference type="NCBIfam" id="TIGR01951">
    <property type="entry name" value="nusB"/>
    <property type="match status" value="1"/>
</dbReference>
<dbReference type="PANTHER" id="PTHR11078:SF3">
    <property type="entry name" value="ANTITERMINATION NUSB DOMAIN-CONTAINING PROTEIN"/>
    <property type="match status" value="1"/>
</dbReference>
<dbReference type="PANTHER" id="PTHR11078">
    <property type="entry name" value="N UTILIZATION SUBSTANCE PROTEIN B-RELATED"/>
    <property type="match status" value="1"/>
</dbReference>
<dbReference type="Pfam" id="PF01029">
    <property type="entry name" value="NusB"/>
    <property type="match status" value="1"/>
</dbReference>
<dbReference type="SUPFAM" id="SSF48013">
    <property type="entry name" value="NusB-like"/>
    <property type="match status" value="1"/>
</dbReference>
<comment type="function">
    <text evidence="1">Involved in transcription antitermination. Required for transcription of ribosomal RNA (rRNA) genes. Binds specifically to the boxA antiterminator sequence of the ribosomal RNA (rrn) operons.</text>
</comment>
<comment type="similarity">
    <text evidence="1">Belongs to the NusB family.</text>
</comment>
<feature type="chain" id="PRO_0000265583" description="Transcription antitermination protein NusB">
    <location>
        <begin position="1"/>
        <end position="139"/>
    </location>
</feature>
<evidence type="ECO:0000255" key="1">
    <source>
        <dbReference type="HAMAP-Rule" id="MF_00073"/>
    </source>
</evidence>
<proteinExistence type="inferred from homology"/>
<keyword id="KW-1185">Reference proteome</keyword>
<keyword id="KW-0694">RNA-binding</keyword>
<keyword id="KW-0804">Transcription</keyword>
<keyword id="KW-0889">Transcription antitermination</keyword>
<keyword id="KW-0805">Transcription regulation</keyword>
<sequence length="139" mass="15493">MSRRTARKQAFFILYQSDVTGSPAEPLIGRWRAYRGELEDYAERVVRGVERERERLDAVLDGVSEGWPVWRMSAVDRTILRLALYEMLHVQDVPPEVAVNEAVELAKGFSGEEAPSFVGGVLRGAEDKIFGKVGDGEPG</sequence>
<accession>Q1AW09</accession>
<protein>
    <recommendedName>
        <fullName evidence="1">Transcription antitermination protein NusB</fullName>
    </recommendedName>
    <alternativeName>
        <fullName evidence="1">Antitermination factor NusB</fullName>
    </alternativeName>
</protein>
<organism>
    <name type="scientific">Rubrobacter xylanophilus (strain DSM 9941 / JCM 11954 / NBRC 16129 / PRD-1)</name>
    <dbReference type="NCBI Taxonomy" id="266117"/>
    <lineage>
        <taxon>Bacteria</taxon>
        <taxon>Bacillati</taxon>
        <taxon>Actinomycetota</taxon>
        <taxon>Rubrobacteria</taxon>
        <taxon>Rubrobacterales</taxon>
        <taxon>Rubrobacteraceae</taxon>
        <taxon>Rubrobacter</taxon>
    </lineage>
</organism>
<gene>
    <name evidence="1" type="primary">nusB</name>
    <name type="ordered locus">Rxyl_1457</name>
</gene>